<accession>B8NPN0</accession>
<proteinExistence type="inferred from homology"/>
<sequence>MKATDLFHVTVLVAGALALEHQQPLIGDLSQDLNHIIDSSPLLSFHRALVQIPSISEHEKNVGEYVLDFLSSQNLTVEKQIVTPESDTEEERFNIYAYVGKNRQPDVLVTSHIDTVPPFIPYSLHAPTSDTSFIRTDLVIAGRGTVDAKASVAAIVFAALETLDENPNASIGLLFDVGEENSGVGMKHFSNSELNPTPPTYHTVIFGEPTELSLVAAHKGTLGFKLVAEGKAAHSGYPWLGESAISSLIPVLAHLDTLQDLPPEKGGLLRSETLGKSTLNIGRVHGGIAANVVPAHAEAAISVRLAAGTPEDTRTIIERAVAKVTSGDRSVYPDFGDRKAGAPPQYFDVDVDGFEVITVNYGTDAPALKIHDQRTQRVKRYLYGPGSILVAHADNEAITVGELEEAVRGYKRLIAASL</sequence>
<comment type="cofactor">
    <cofactor evidence="1">
        <name>Zn(2+)</name>
        <dbReference type="ChEBI" id="CHEBI:29105"/>
    </cofactor>
    <text evidence="1">Binds 2 Zn(2+) ions per subunit.</text>
</comment>
<comment type="subcellular location">
    <subcellularLocation>
        <location evidence="3">Secreted</location>
    </subcellularLocation>
</comment>
<comment type="similarity">
    <text evidence="3">Belongs to the peptidase M20A family.</text>
</comment>
<organism>
    <name type="scientific">Aspergillus flavus (strain ATCC 200026 / FGSC A1120 / IAM 13836 / NRRL 3357 / JCM 12722 / SRRC 167)</name>
    <dbReference type="NCBI Taxonomy" id="332952"/>
    <lineage>
        <taxon>Eukaryota</taxon>
        <taxon>Fungi</taxon>
        <taxon>Dikarya</taxon>
        <taxon>Ascomycota</taxon>
        <taxon>Pezizomycotina</taxon>
        <taxon>Eurotiomycetes</taxon>
        <taxon>Eurotiomycetidae</taxon>
        <taxon>Eurotiales</taxon>
        <taxon>Aspergillaceae</taxon>
        <taxon>Aspergillus</taxon>
        <taxon>Aspergillus subgen. Circumdati</taxon>
    </lineage>
</organism>
<protein>
    <recommendedName>
        <fullName>Probable carboxypeptidase AFLA_000940</fullName>
        <ecNumber>3.4.17.-</ecNumber>
    </recommendedName>
    <alternativeName>
        <fullName>Peptidase M20 domain-containing protein AFLA_000940</fullName>
    </alternativeName>
</protein>
<name>P20D1_ASPFN</name>
<evidence type="ECO:0000250" key="1"/>
<evidence type="ECO:0000255" key="2"/>
<evidence type="ECO:0000305" key="3"/>
<gene>
    <name type="ORF">AFLA_000940</name>
</gene>
<dbReference type="EC" id="3.4.17.-"/>
<dbReference type="EMBL" id="EQ963482">
    <property type="protein sequence ID" value="EED47453.1"/>
    <property type="molecule type" value="Genomic_DNA"/>
</dbReference>
<dbReference type="RefSeq" id="XP_002382295.1">
    <property type="nucleotide sequence ID" value="XM_002382254.1"/>
</dbReference>
<dbReference type="SMR" id="B8NPN0"/>
<dbReference type="STRING" id="332952.B8NPN0"/>
<dbReference type="EnsemblFungi" id="EED47453">
    <property type="protein sequence ID" value="EED47453"/>
    <property type="gene ID" value="AFLA_000940"/>
</dbReference>
<dbReference type="VEuPathDB" id="FungiDB:AFLA_011420"/>
<dbReference type="eggNOG" id="KOG2275">
    <property type="taxonomic scope" value="Eukaryota"/>
</dbReference>
<dbReference type="HOGENOM" id="CLU_021802_3_0_1"/>
<dbReference type="OMA" id="HDEEIGC"/>
<dbReference type="GO" id="GO:0005576">
    <property type="term" value="C:extracellular region"/>
    <property type="evidence" value="ECO:0007669"/>
    <property type="project" value="UniProtKB-SubCell"/>
</dbReference>
<dbReference type="GO" id="GO:0046872">
    <property type="term" value="F:metal ion binding"/>
    <property type="evidence" value="ECO:0007669"/>
    <property type="project" value="UniProtKB-KW"/>
</dbReference>
<dbReference type="GO" id="GO:0008233">
    <property type="term" value="F:peptidase activity"/>
    <property type="evidence" value="ECO:0007669"/>
    <property type="project" value="UniProtKB-KW"/>
</dbReference>
<dbReference type="GO" id="GO:0006508">
    <property type="term" value="P:proteolysis"/>
    <property type="evidence" value="ECO:0007669"/>
    <property type="project" value="UniProtKB-KW"/>
</dbReference>
<dbReference type="CDD" id="cd05652">
    <property type="entry name" value="M20_ArgE_DapE-like_fungal"/>
    <property type="match status" value="1"/>
</dbReference>
<dbReference type="Gene3D" id="3.30.70.360">
    <property type="match status" value="1"/>
</dbReference>
<dbReference type="Gene3D" id="3.40.630.10">
    <property type="entry name" value="Zn peptidases"/>
    <property type="match status" value="1"/>
</dbReference>
<dbReference type="InterPro" id="IPR001261">
    <property type="entry name" value="ArgE/DapE_CS"/>
</dbReference>
<dbReference type="InterPro" id="IPR036264">
    <property type="entry name" value="Bact_exopeptidase_dim_dom"/>
</dbReference>
<dbReference type="InterPro" id="IPR002933">
    <property type="entry name" value="Peptidase_M20"/>
</dbReference>
<dbReference type="InterPro" id="IPR011650">
    <property type="entry name" value="Peptidase_M20_dimer"/>
</dbReference>
<dbReference type="InterPro" id="IPR050072">
    <property type="entry name" value="Peptidase_M20A"/>
</dbReference>
<dbReference type="PANTHER" id="PTHR43808">
    <property type="entry name" value="ACETYLORNITHINE DEACETYLASE"/>
    <property type="match status" value="1"/>
</dbReference>
<dbReference type="PANTHER" id="PTHR43808:SF8">
    <property type="entry name" value="PEPTIDASE M20 DIMERISATION DOMAIN-CONTAINING PROTEIN"/>
    <property type="match status" value="1"/>
</dbReference>
<dbReference type="Pfam" id="PF07687">
    <property type="entry name" value="M20_dimer"/>
    <property type="match status" value="1"/>
</dbReference>
<dbReference type="Pfam" id="PF01546">
    <property type="entry name" value="Peptidase_M20"/>
    <property type="match status" value="1"/>
</dbReference>
<dbReference type="SUPFAM" id="SSF55031">
    <property type="entry name" value="Bacterial exopeptidase dimerisation domain"/>
    <property type="match status" value="1"/>
</dbReference>
<dbReference type="SUPFAM" id="SSF53187">
    <property type="entry name" value="Zn-dependent exopeptidases"/>
    <property type="match status" value="1"/>
</dbReference>
<dbReference type="PROSITE" id="PS00758">
    <property type="entry name" value="ARGE_DAPE_CPG2_1"/>
    <property type="match status" value="1"/>
</dbReference>
<dbReference type="PROSITE" id="PS00759">
    <property type="entry name" value="ARGE_DAPE_CPG2_2"/>
    <property type="match status" value="1"/>
</dbReference>
<keyword id="KW-0325">Glycoprotein</keyword>
<keyword id="KW-0378">Hydrolase</keyword>
<keyword id="KW-0479">Metal-binding</keyword>
<keyword id="KW-0645">Protease</keyword>
<keyword id="KW-0964">Secreted</keyword>
<keyword id="KW-0732">Signal</keyword>
<keyword id="KW-0862">Zinc</keyword>
<feature type="signal peptide" evidence="2">
    <location>
        <begin position="1"/>
        <end position="18"/>
    </location>
</feature>
<feature type="chain" id="PRO_0000411229" description="Probable carboxypeptidase AFLA_000940">
    <location>
        <begin position="19"/>
        <end position="418"/>
    </location>
</feature>
<feature type="active site" description="Proton acceptor" evidence="1">
    <location>
        <position position="179"/>
    </location>
</feature>
<feature type="binding site" evidence="1">
    <location>
        <position position="147"/>
    </location>
    <ligand>
        <name>Zn(2+)</name>
        <dbReference type="ChEBI" id="CHEBI:29105"/>
        <label>1</label>
    </ligand>
</feature>
<feature type="binding site" evidence="1">
    <location>
        <position position="147"/>
    </location>
    <ligand>
        <name>Zn(2+)</name>
        <dbReference type="ChEBI" id="CHEBI:29105"/>
        <label>2</label>
    </ligand>
</feature>
<feature type="binding site" evidence="1">
    <location>
        <position position="180"/>
    </location>
    <ligand>
        <name>Zn(2+)</name>
        <dbReference type="ChEBI" id="CHEBI:29105"/>
        <label>1</label>
    </ligand>
</feature>
<feature type="glycosylation site" description="N-linked (GlcNAc...) asparagine" evidence="2">
    <location>
        <position position="74"/>
    </location>
</feature>
<feature type="glycosylation site" description="N-linked (GlcNAc...) asparagine" evidence="2">
    <location>
        <position position="168"/>
    </location>
</feature>
<reference key="1">
    <citation type="journal article" date="2015" name="Genome Announc.">
        <title>Genome sequence of Aspergillus flavus NRRL 3357, a strain that causes aflatoxin contamination of food and feed.</title>
        <authorList>
            <person name="Nierman W.C."/>
            <person name="Yu J."/>
            <person name="Fedorova-Abrams N.D."/>
            <person name="Losada L."/>
            <person name="Cleveland T.E."/>
            <person name="Bhatnagar D."/>
            <person name="Bennett J.W."/>
            <person name="Dean R."/>
            <person name="Payne G.A."/>
        </authorList>
    </citation>
    <scope>NUCLEOTIDE SEQUENCE [LARGE SCALE GENOMIC DNA]</scope>
    <source>
        <strain>ATCC 200026 / FGSC A1120 / IAM 13836 / NRRL 3357 / JCM 12722 / SRRC 167</strain>
    </source>
</reference>